<comment type="interaction">
    <interactant intactId="EBI-10264855">
        <id>Q8N112</id>
    </interactant>
    <interactant intactId="EBI-307924">
        <id>P21854</id>
        <label>CD72</label>
    </interactant>
    <organismsDiffer>false</organismsDiffer>
    <experiments>3</experiments>
</comment>
<comment type="interaction">
    <interactant intactId="EBI-10264855">
        <id>Q8N112</id>
    </interactant>
    <interactant intactId="EBI-740744">
        <id>O95471</id>
        <label>CLDN7</label>
    </interactant>
    <organismsDiffer>false</organismsDiffer>
    <experiments>3</experiments>
</comment>
<comment type="interaction">
    <interactant intactId="EBI-10264855">
        <id>Q8N112</id>
    </interactant>
    <interactant intactId="EBI-12811991">
        <id>Q2HXU8-2</id>
        <label>CLEC12B</label>
    </interactant>
    <organismsDiffer>false</organismsDiffer>
    <experiments>3</experiments>
</comment>
<comment type="interaction">
    <interactant intactId="EBI-10264855">
        <id>Q8N112</id>
    </interactant>
    <interactant intactId="EBI-12019274">
        <id>Q4LDR2</id>
        <label>CTXN3</label>
    </interactant>
    <organismsDiffer>false</organismsDiffer>
    <experiments>3</experiments>
</comment>
<comment type="interaction">
    <interactant intactId="EBI-10264855">
        <id>Q8N112</id>
    </interactant>
    <interactant intactId="EBI-3911467">
        <id>Q07325</id>
        <label>CXCL9</label>
    </interactant>
    <organismsDiffer>false</organismsDiffer>
    <experiments>3</experiments>
</comment>
<comment type="interaction">
    <interactant intactId="EBI-10264855">
        <id>Q8N112</id>
    </interactant>
    <interactant intactId="EBI-4319440">
        <id>P54849</id>
        <label>EMP1</label>
    </interactant>
    <organismsDiffer>false</organismsDiffer>
    <experiments>6</experiments>
</comment>
<comment type="interaction">
    <interactant intactId="EBI-10264855">
        <id>Q8N112</id>
    </interactant>
    <interactant intactId="EBI-6166686">
        <id>Q96F15</id>
        <label>GIMAP5</label>
    </interactant>
    <organismsDiffer>false</organismsDiffer>
    <experiments>6</experiments>
</comment>
<comment type="interaction">
    <interactant intactId="EBI-10264855">
        <id>Q8N112</id>
    </interactant>
    <interactant intactId="EBI-9018187">
        <id>P26715</id>
        <label>KLRC1</label>
    </interactant>
    <organismsDiffer>false</organismsDiffer>
    <experiments>3</experiments>
</comment>
<comment type="interaction">
    <interactant intactId="EBI-10264855">
        <id>Q8N112</id>
    </interactant>
    <interactant intactId="EBI-10200825">
        <id>Q8N8F7</id>
        <label>LSMEM1</label>
    </interactant>
    <organismsDiffer>false</organismsDiffer>
    <experiments>8</experiments>
</comment>
<comment type="interaction">
    <interactant intactId="EBI-10264855">
        <id>Q8N112</id>
    </interactant>
    <interactant intactId="EBI-692836">
        <id>P26678</id>
        <label>PLN</label>
    </interactant>
    <organismsDiffer>false</organismsDiffer>
    <experiments>3</experiments>
</comment>
<comment type="interaction">
    <interactant intactId="EBI-10264855">
        <id>Q8N112</id>
    </interactant>
    <interactant intactId="EBI-8652744">
        <id>Q96IW7</id>
        <label>SEC22A</label>
    </interactant>
    <organismsDiffer>false</organismsDiffer>
    <experiments>3</experiments>
</comment>
<comment type="interaction">
    <interactant intactId="EBI-10264855">
        <id>Q8N112</id>
    </interactant>
    <interactant intactId="EBI-10197617">
        <id>P11686</id>
        <label>SFTPC</label>
    </interactant>
    <organismsDiffer>false</organismsDiffer>
    <experiments>3</experiments>
</comment>
<comment type="interaction">
    <interactant intactId="EBI-10264855">
        <id>Q8N112</id>
    </interactant>
    <interactant intactId="EBI-347996">
        <id>O43765</id>
        <label>SGTA</label>
    </interactant>
    <organismsDiffer>false</organismsDiffer>
    <experiments>3</experiments>
</comment>
<comment type="interaction">
    <interactant intactId="EBI-10264855">
        <id>Q8N112</id>
    </interactant>
    <interactant intactId="EBI-741850">
        <id>Q9BZL3</id>
        <label>SMIM3</label>
    </interactant>
    <organismsDiffer>false</organismsDiffer>
    <experiments>3</experiments>
</comment>
<comment type="interaction">
    <interactant intactId="EBI-10264855">
        <id>Q8N112</id>
    </interactant>
    <interactant intactId="EBI-17498703">
        <id>Q9HBV2</id>
        <label>SPACA1</label>
    </interactant>
    <organismsDiffer>false</organismsDiffer>
    <experiments>3</experiments>
</comment>
<comment type="interaction">
    <interactant intactId="EBI-10264855">
        <id>Q8N112</id>
    </interactant>
    <interactant intactId="EBI-742688">
        <id>Q9NZD8</id>
        <label>SPG21</label>
    </interactant>
    <organismsDiffer>false</organismsDiffer>
    <experiments>3</experiments>
</comment>
<comment type="interaction">
    <interactant intactId="EBI-10264855">
        <id>Q8N112</id>
    </interactant>
    <interactant intactId="EBI-3221827">
        <id>O15400</id>
        <label>STX7</label>
    </interactant>
    <organismsDiffer>false</organismsDiffer>
    <experiments>4</experiments>
</comment>
<comment type="interaction">
    <interactant intactId="EBI-10264855">
        <id>Q8N112</id>
    </interactant>
    <interactant intactId="EBI-13342951">
        <id>Q96AN5</id>
        <label>TMEM143</label>
    </interactant>
    <organismsDiffer>false</organismsDiffer>
    <experiments>3</experiments>
</comment>
<comment type="interaction">
    <interactant intactId="EBI-10264855">
        <id>Q8N112</id>
    </interactant>
    <interactant intactId="EBI-10173151">
        <id>A2RU14</id>
        <label>TMEM218</label>
    </interactant>
    <organismsDiffer>false</organismsDiffer>
    <experiments>5</experiments>
</comment>
<comment type="subcellular location">
    <subcellularLocation>
        <location evidence="2">Membrane</location>
        <topology evidence="2">Single-pass membrane protein</topology>
    </subcellularLocation>
</comment>
<reference key="1">
    <citation type="journal article" date="2004" name="Nat. Genet.">
        <title>Complete sequencing and characterization of 21,243 full-length human cDNAs.</title>
        <authorList>
            <person name="Ota T."/>
            <person name="Suzuki Y."/>
            <person name="Nishikawa T."/>
            <person name="Otsuki T."/>
            <person name="Sugiyama T."/>
            <person name="Irie R."/>
            <person name="Wakamatsu A."/>
            <person name="Hayashi K."/>
            <person name="Sato H."/>
            <person name="Nagai K."/>
            <person name="Kimura K."/>
            <person name="Makita H."/>
            <person name="Sekine M."/>
            <person name="Obayashi M."/>
            <person name="Nishi T."/>
            <person name="Shibahara T."/>
            <person name="Tanaka T."/>
            <person name="Ishii S."/>
            <person name="Yamamoto J."/>
            <person name="Saito K."/>
            <person name="Kawai Y."/>
            <person name="Isono Y."/>
            <person name="Nakamura Y."/>
            <person name="Nagahari K."/>
            <person name="Murakami K."/>
            <person name="Yasuda T."/>
            <person name="Iwayanagi T."/>
            <person name="Wagatsuma M."/>
            <person name="Shiratori A."/>
            <person name="Sudo H."/>
            <person name="Hosoiri T."/>
            <person name="Kaku Y."/>
            <person name="Kodaira H."/>
            <person name="Kondo H."/>
            <person name="Sugawara M."/>
            <person name="Takahashi M."/>
            <person name="Kanda K."/>
            <person name="Yokoi T."/>
            <person name="Furuya T."/>
            <person name="Kikkawa E."/>
            <person name="Omura Y."/>
            <person name="Abe K."/>
            <person name="Kamihara K."/>
            <person name="Katsuta N."/>
            <person name="Sato K."/>
            <person name="Tanikawa M."/>
            <person name="Yamazaki M."/>
            <person name="Ninomiya K."/>
            <person name="Ishibashi T."/>
            <person name="Yamashita H."/>
            <person name="Murakawa K."/>
            <person name="Fujimori K."/>
            <person name="Tanai H."/>
            <person name="Kimata M."/>
            <person name="Watanabe M."/>
            <person name="Hiraoka S."/>
            <person name="Chiba Y."/>
            <person name="Ishida S."/>
            <person name="Ono Y."/>
            <person name="Takiguchi S."/>
            <person name="Watanabe S."/>
            <person name="Yosida M."/>
            <person name="Hotuta T."/>
            <person name="Kusano J."/>
            <person name="Kanehori K."/>
            <person name="Takahashi-Fujii A."/>
            <person name="Hara H."/>
            <person name="Tanase T.-O."/>
            <person name="Nomura Y."/>
            <person name="Togiya S."/>
            <person name="Komai F."/>
            <person name="Hara R."/>
            <person name="Takeuchi K."/>
            <person name="Arita M."/>
            <person name="Imose N."/>
            <person name="Musashino K."/>
            <person name="Yuuki H."/>
            <person name="Oshima A."/>
            <person name="Sasaki N."/>
            <person name="Aotsuka S."/>
            <person name="Yoshikawa Y."/>
            <person name="Matsunawa H."/>
            <person name="Ichihara T."/>
            <person name="Shiohata N."/>
            <person name="Sano S."/>
            <person name="Moriya S."/>
            <person name="Momiyama H."/>
            <person name="Satoh N."/>
            <person name="Takami S."/>
            <person name="Terashima Y."/>
            <person name="Suzuki O."/>
            <person name="Nakagawa S."/>
            <person name="Senoh A."/>
            <person name="Mizoguchi H."/>
            <person name="Goto Y."/>
            <person name="Shimizu F."/>
            <person name="Wakebe H."/>
            <person name="Hishigaki H."/>
            <person name="Watanabe T."/>
            <person name="Sugiyama A."/>
            <person name="Takemoto M."/>
            <person name="Kawakami B."/>
            <person name="Yamazaki M."/>
            <person name="Watanabe K."/>
            <person name="Kumagai A."/>
            <person name="Itakura S."/>
            <person name="Fukuzumi Y."/>
            <person name="Fujimori Y."/>
            <person name="Komiyama M."/>
            <person name="Tashiro H."/>
            <person name="Tanigami A."/>
            <person name="Fujiwara T."/>
            <person name="Ono T."/>
            <person name="Yamada K."/>
            <person name="Fujii Y."/>
            <person name="Ozaki K."/>
            <person name="Hirao M."/>
            <person name="Ohmori Y."/>
            <person name="Kawabata A."/>
            <person name="Hikiji T."/>
            <person name="Kobatake N."/>
            <person name="Inagaki H."/>
            <person name="Ikema Y."/>
            <person name="Okamoto S."/>
            <person name="Okitani R."/>
            <person name="Kawakami T."/>
            <person name="Noguchi S."/>
            <person name="Itoh T."/>
            <person name="Shigeta K."/>
            <person name="Senba T."/>
            <person name="Matsumura K."/>
            <person name="Nakajima Y."/>
            <person name="Mizuno T."/>
            <person name="Morinaga M."/>
            <person name="Sasaki M."/>
            <person name="Togashi T."/>
            <person name="Oyama M."/>
            <person name="Hata H."/>
            <person name="Watanabe M."/>
            <person name="Komatsu T."/>
            <person name="Mizushima-Sugano J."/>
            <person name="Satoh T."/>
            <person name="Shirai Y."/>
            <person name="Takahashi Y."/>
            <person name="Nakagawa K."/>
            <person name="Okumura K."/>
            <person name="Nagase T."/>
            <person name="Nomura N."/>
            <person name="Kikuchi H."/>
            <person name="Masuho Y."/>
            <person name="Yamashita R."/>
            <person name="Nakai K."/>
            <person name="Yada T."/>
            <person name="Nakamura Y."/>
            <person name="Ohara O."/>
            <person name="Isogai T."/>
            <person name="Sugano S."/>
        </authorList>
    </citation>
    <scope>NUCLEOTIDE SEQUENCE [LARGE SCALE MRNA]</scope>
    <source>
        <tissue>Heart</tissue>
    </source>
</reference>
<reference key="2">
    <citation type="journal article" date="2006" name="Nature">
        <title>The DNA sequence, annotation and analysis of human chromosome 3.</title>
        <authorList>
            <person name="Muzny D.M."/>
            <person name="Scherer S.E."/>
            <person name="Kaul R."/>
            <person name="Wang J."/>
            <person name="Yu J."/>
            <person name="Sudbrak R."/>
            <person name="Buhay C.J."/>
            <person name="Chen R."/>
            <person name="Cree A."/>
            <person name="Ding Y."/>
            <person name="Dugan-Rocha S."/>
            <person name="Gill R."/>
            <person name="Gunaratne P."/>
            <person name="Harris R.A."/>
            <person name="Hawes A.C."/>
            <person name="Hernandez J."/>
            <person name="Hodgson A.V."/>
            <person name="Hume J."/>
            <person name="Jackson A."/>
            <person name="Khan Z.M."/>
            <person name="Kovar-Smith C."/>
            <person name="Lewis L.R."/>
            <person name="Lozado R.J."/>
            <person name="Metzker M.L."/>
            <person name="Milosavljevic A."/>
            <person name="Miner G.R."/>
            <person name="Morgan M.B."/>
            <person name="Nazareth L.V."/>
            <person name="Scott G."/>
            <person name="Sodergren E."/>
            <person name="Song X.-Z."/>
            <person name="Steffen D."/>
            <person name="Wei S."/>
            <person name="Wheeler D.A."/>
            <person name="Wright M.W."/>
            <person name="Worley K.C."/>
            <person name="Yuan Y."/>
            <person name="Zhang Z."/>
            <person name="Adams C.Q."/>
            <person name="Ansari-Lari M.A."/>
            <person name="Ayele M."/>
            <person name="Brown M.J."/>
            <person name="Chen G."/>
            <person name="Chen Z."/>
            <person name="Clendenning J."/>
            <person name="Clerc-Blankenburg K.P."/>
            <person name="Chen R."/>
            <person name="Chen Z."/>
            <person name="Davis C."/>
            <person name="Delgado O."/>
            <person name="Dinh H.H."/>
            <person name="Dong W."/>
            <person name="Draper H."/>
            <person name="Ernst S."/>
            <person name="Fu G."/>
            <person name="Gonzalez-Garay M.L."/>
            <person name="Garcia D.K."/>
            <person name="Gillett W."/>
            <person name="Gu J."/>
            <person name="Hao B."/>
            <person name="Haugen E."/>
            <person name="Havlak P."/>
            <person name="He X."/>
            <person name="Hennig S."/>
            <person name="Hu S."/>
            <person name="Huang W."/>
            <person name="Jackson L.R."/>
            <person name="Jacob L.S."/>
            <person name="Kelly S.H."/>
            <person name="Kube M."/>
            <person name="Levy R."/>
            <person name="Li Z."/>
            <person name="Liu B."/>
            <person name="Liu J."/>
            <person name="Liu W."/>
            <person name="Lu J."/>
            <person name="Maheshwari M."/>
            <person name="Nguyen B.-V."/>
            <person name="Okwuonu G.O."/>
            <person name="Palmeiri A."/>
            <person name="Pasternak S."/>
            <person name="Perez L.M."/>
            <person name="Phelps K.A."/>
            <person name="Plopper F.J."/>
            <person name="Qiang B."/>
            <person name="Raymond C."/>
            <person name="Rodriguez R."/>
            <person name="Saenphimmachak C."/>
            <person name="Santibanez J."/>
            <person name="Shen H."/>
            <person name="Shen Y."/>
            <person name="Subramanian S."/>
            <person name="Tabor P.E."/>
            <person name="Verduzco D."/>
            <person name="Waldron L."/>
            <person name="Wang J."/>
            <person name="Wang J."/>
            <person name="Wang Q."/>
            <person name="Williams G.A."/>
            <person name="Wong G.K.-S."/>
            <person name="Yao Z."/>
            <person name="Zhang J."/>
            <person name="Zhang X."/>
            <person name="Zhao G."/>
            <person name="Zhou J."/>
            <person name="Zhou Y."/>
            <person name="Nelson D."/>
            <person name="Lehrach H."/>
            <person name="Reinhardt R."/>
            <person name="Naylor S.L."/>
            <person name="Yang H."/>
            <person name="Olson M."/>
            <person name="Weinstock G."/>
            <person name="Gibbs R.A."/>
        </authorList>
    </citation>
    <scope>NUCLEOTIDE SEQUENCE [LARGE SCALE GENOMIC DNA]</scope>
</reference>
<reference key="3">
    <citation type="journal article" date="2004" name="Genome Res.">
        <title>The status, quality, and expansion of the NIH full-length cDNA project: the Mammalian Gene Collection (MGC).</title>
        <authorList>
            <consortium name="The MGC Project Team"/>
        </authorList>
    </citation>
    <scope>NUCLEOTIDE SEQUENCE [LARGE SCALE MRNA]</scope>
    <source>
        <tissue>Brain</tissue>
    </source>
</reference>
<dbReference type="EMBL" id="AK095927">
    <property type="protein sequence ID" value="BAC04652.1"/>
    <property type="molecule type" value="mRNA"/>
</dbReference>
<dbReference type="EMBL" id="U73167">
    <property type="status" value="NOT_ANNOTATED_CDS"/>
    <property type="molecule type" value="Genomic_DNA"/>
</dbReference>
<dbReference type="EMBL" id="BC028000">
    <property type="protein sequence ID" value="AAH28000.1"/>
    <property type="molecule type" value="mRNA"/>
</dbReference>
<dbReference type="CCDS" id="CCDS2814.1"/>
<dbReference type="RefSeq" id="NP_001291314.1">
    <property type="nucleotide sequence ID" value="NM_001304385.1"/>
</dbReference>
<dbReference type="RefSeq" id="NP_694947.1">
    <property type="nucleotide sequence ID" value="NM_153215.3"/>
</dbReference>
<dbReference type="SMR" id="Q8N112"/>
<dbReference type="BioGRID" id="126313">
    <property type="interactions" value="52"/>
</dbReference>
<dbReference type="FunCoup" id="Q8N112">
    <property type="interactions" value="14"/>
</dbReference>
<dbReference type="IntAct" id="Q8N112">
    <property type="interactions" value="45"/>
</dbReference>
<dbReference type="STRING" id="9606.ENSP00000315081"/>
<dbReference type="BioMuta" id="LSMEM2"/>
<dbReference type="DMDM" id="74728479"/>
<dbReference type="PaxDb" id="9606-ENSP00000315081"/>
<dbReference type="PeptideAtlas" id="Q8N112"/>
<dbReference type="Antibodypedia" id="64735">
    <property type="antibodies" value="28 antibodies from 7 providers"/>
</dbReference>
<dbReference type="DNASU" id="132228"/>
<dbReference type="Ensembl" id="ENST00000316436.4">
    <property type="protein sequence ID" value="ENSP00000315081.3"/>
    <property type="gene ID" value="ENSG00000179564.4"/>
</dbReference>
<dbReference type="GeneID" id="132228"/>
<dbReference type="KEGG" id="hsa:132228"/>
<dbReference type="MANE-Select" id="ENST00000316436.4">
    <property type="protein sequence ID" value="ENSP00000315081.3"/>
    <property type="RefSeq nucleotide sequence ID" value="NM_153215.3"/>
    <property type="RefSeq protein sequence ID" value="NP_694947.1"/>
</dbReference>
<dbReference type="UCSC" id="uc003cyz.4">
    <property type="organism name" value="human"/>
</dbReference>
<dbReference type="AGR" id="HGNC:26781"/>
<dbReference type="CTD" id="132228"/>
<dbReference type="GeneCards" id="LSMEM2"/>
<dbReference type="HGNC" id="HGNC:26781">
    <property type="gene designation" value="LSMEM2"/>
</dbReference>
<dbReference type="HPA" id="ENSG00000179564">
    <property type="expression patterns" value="Tissue enhanced (heart muscle, skeletal muscle)"/>
</dbReference>
<dbReference type="neXtProt" id="NX_Q8N112"/>
<dbReference type="PharmGKB" id="PA143485322"/>
<dbReference type="VEuPathDB" id="HostDB:ENSG00000179564"/>
<dbReference type="eggNOG" id="ENOG502SABZ">
    <property type="taxonomic scope" value="Eukaryota"/>
</dbReference>
<dbReference type="GeneTree" id="ENSGT00390000000577"/>
<dbReference type="HOGENOM" id="CLU_137458_0_0_1"/>
<dbReference type="InParanoid" id="Q8N112"/>
<dbReference type="OMA" id="AHTLHTQ"/>
<dbReference type="OrthoDB" id="9447266at2759"/>
<dbReference type="PAN-GO" id="Q8N112">
    <property type="GO annotations" value="0 GO annotations based on evolutionary models"/>
</dbReference>
<dbReference type="PhylomeDB" id="Q8N112"/>
<dbReference type="TreeFam" id="TF338480"/>
<dbReference type="PathwayCommons" id="Q8N112"/>
<dbReference type="SignaLink" id="Q8N112"/>
<dbReference type="BioGRID-ORCS" id="132228">
    <property type="hits" value="8 hits in 1140 CRISPR screens"/>
</dbReference>
<dbReference type="GenomeRNAi" id="132228"/>
<dbReference type="Pharos" id="Q8N112">
    <property type="development level" value="Tdark"/>
</dbReference>
<dbReference type="PRO" id="PR:Q8N112"/>
<dbReference type="Proteomes" id="UP000005640">
    <property type="component" value="Chromosome 3"/>
</dbReference>
<dbReference type="RNAct" id="Q8N112">
    <property type="molecule type" value="protein"/>
</dbReference>
<dbReference type="Bgee" id="ENSG00000179564">
    <property type="expression patterns" value="Expressed in apex of heart and 103 other cell types or tissues"/>
</dbReference>
<dbReference type="GO" id="GO:0016020">
    <property type="term" value="C:membrane"/>
    <property type="evidence" value="ECO:0007669"/>
    <property type="project" value="UniProtKB-SubCell"/>
</dbReference>
<dbReference type="InterPro" id="IPR031674">
    <property type="entry name" value="DUF4714"/>
</dbReference>
<dbReference type="PANTHER" id="PTHR37333">
    <property type="entry name" value="LEUCINE-RICH SINGLE-PASS MEMBRANE PROTEIN 2"/>
    <property type="match status" value="1"/>
</dbReference>
<dbReference type="PANTHER" id="PTHR37333:SF1">
    <property type="entry name" value="LEUCINE-RICH SINGLE-PASS MEMBRANE PROTEIN 2"/>
    <property type="match status" value="1"/>
</dbReference>
<dbReference type="Pfam" id="PF15833">
    <property type="entry name" value="DUF4714"/>
    <property type="match status" value="1"/>
</dbReference>
<sequence>MPSLAPDCPLLAMPEETQEDSVAPMMPSQRSRGPLAPNHVHEVCLHQVESISDLHSGAGTLRPYLTEEARPWDELLGVLPPSLCAQAGCSPVYRRGGFLLLLALLVLTCLVLALLAVYLSVLQSESLRILAHTLRTQEETLLKLRLASLSQLRRLNSSEAQAPS</sequence>
<evidence type="ECO:0000255" key="1"/>
<evidence type="ECO:0000305" key="2"/>
<gene>
    <name type="primary">LSMEM2</name>
    <name type="synonym">C3orf45</name>
</gene>
<proteinExistence type="evidence at protein level"/>
<keyword id="KW-0472">Membrane</keyword>
<keyword id="KW-1185">Reference proteome</keyword>
<keyword id="KW-0812">Transmembrane</keyword>
<keyword id="KW-1133">Transmembrane helix</keyword>
<accession>Q8N112</accession>
<organism>
    <name type="scientific">Homo sapiens</name>
    <name type="common">Human</name>
    <dbReference type="NCBI Taxonomy" id="9606"/>
    <lineage>
        <taxon>Eukaryota</taxon>
        <taxon>Metazoa</taxon>
        <taxon>Chordata</taxon>
        <taxon>Craniata</taxon>
        <taxon>Vertebrata</taxon>
        <taxon>Euteleostomi</taxon>
        <taxon>Mammalia</taxon>
        <taxon>Eutheria</taxon>
        <taxon>Euarchontoglires</taxon>
        <taxon>Primates</taxon>
        <taxon>Haplorrhini</taxon>
        <taxon>Catarrhini</taxon>
        <taxon>Hominidae</taxon>
        <taxon>Homo</taxon>
    </lineage>
</organism>
<protein>
    <recommendedName>
        <fullName>Leucine-rich single-pass membrane protein 2</fullName>
    </recommendedName>
</protein>
<name>LSME2_HUMAN</name>
<feature type="chain" id="PRO_0000242663" description="Leucine-rich single-pass membrane protein 2">
    <location>
        <begin position="1"/>
        <end position="164"/>
    </location>
</feature>
<feature type="transmembrane region" description="Helical" evidence="1">
    <location>
        <begin position="97"/>
        <end position="117"/>
    </location>
</feature>